<keyword id="KW-0175">Coiled coil</keyword>
<keyword id="KW-1185">Reference proteome</keyword>
<keyword id="KW-0926">Vacuole</keyword>
<proteinExistence type="inferred from homology"/>
<protein>
    <recommendedName>
        <fullName>Vacuolar morphogenesis protein 7 homolog</fullName>
    </recommendedName>
</protein>
<comment type="function">
    <text evidence="1">Essential for proper morphogenesis of the vacuole. May exist as structural reinforcement on the surface of the vacuolar membrane and be required for maintenance against rupture by osmotic pressure (By similarity).</text>
</comment>
<comment type="subunit">
    <text evidence="1">Possibly multimeric.</text>
</comment>
<comment type="subcellular location">
    <subcellularLocation>
        <location evidence="5">Vacuole</location>
    </subcellularLocation>
</comment>
<organism>
    <name type="scientific">Schizosaccharomyces pombe (strain 972 / ATCC 24843)</name>
    <name type="common">Fission yeast</name>
    <dbReference type="NCBI Taxonomy" id="284812"/>
    <lineage>
        <taxon>Eukaryota</taxon>
        <taxon>Fungi</taxon>
        <taxon>Dikarya</taxon>
        <taxon>Ascomycota</taxon>
        <taxon>Taphrinomycotina</taxon>
        <taxon>Schizosaccharomycetes</taxon>
        <taxon>Schizosaccharomycetales</taxon>
        <taxon>Schizosaccharomycetaceae</taxon>
        <taxon>Schizosaccharomyces</taxon>
    </lineage>
</organism>
<accession>O74509</accession>
<reference key="1">
    <citation type="journal article" date="2002" name="Nature">
        <title>The genome sequence of Schizosaccharomyces pombe.</title>
        <authorList>
            <person name="Wood V."/>
            <person name="Gwilliam R."/>
            <person name="Rajandream M.A."/>
            <person name="Lyne M.H."/>
            <person name="Lyne R."/>
            <person name="Stewart A."/>
            <person name="Sgouros J.G."/>
            <person name="Peat N."/>
            <person name="Hayles J."/>
            <person name="Baker S.G."/>
            <person name="Basham D."/>
            <person name="Bowman S."/>
            <person name="Brooks K."/>
            <person name="Brown D."/>
            <person name="Brown S."/>
            <person name="Chillingworth T."/>
            <person name="Churcher C.M."/>
            <person name="Collins M."/>
            <person name="Connor R."/>
            <person name="Cronin A."/>
            <person name="Davis P."/>
            <person name="Feltwell T."/>
            <person name="Fraser A."/>
            <person name="Gentles S."/>
            <person name="Goble A."/>
            <person name="Hamlin N."/>
            <person name="Harris D.E."/>
            <person name="Hidalgo J."/>
            <person name="Hodgson G."/>
            <person name="Holroyd S."/>
            <person name="Hornsby T."/>
            <person name="Howarth S."/>
            <person name="Huckle E.J."/>
            <person name="Hunt S."/>
            <person name="Jagels K."/>
            <person name="James K.D."/>
            <person name="Jones L."/>
            <person name="Jones M."/>
            <person name="Leather S."/>
            <person name="McDonald S."/>
            <person name="McLean J."/>
            <person name="Mooney P."/>
            <person name="Moule S."/>
            <person name="Mungall K.L."/>
            <person name="Murphy L.D."/>
            <person name="Niblett D."/>
            <person name="Odell C."/>
            <person name="Oliver K."/>
            <person name="O'Neil S."/>
            <person name="Pearson D."/>
            <person name="Quail M.A."/>
            <person name="Rabbinowitsch E."/>
            <person name="Rutherford K.M."/>
            <person name="Rutter S."/>
            <person name="Saunders D."/>
            <person name="Seeger K."/>
            <person name="Sharp S."/>
            <person name="Skelton J."/>
            <person name="Simmonds M.N."/>
            <person name="Squares R."/>
            <person name="Squares S."/>
            <person name="Stevens K."/>
            <person name="Taylor K."/>
            <person name="Taylor R.G."/>
            <person name="Tivey A."/>
            <person name="Walsh S.V."/>
            <person name="Warren T."/>
            <person name="Whitehead S."/>
            <person name="Woodward J.R."/>
            <person name="Volckaert G."/>
            <person name="Aert R."/>
            <person name="Robben J."/>
            <person name="Grymonprez B."/>
            <person name="Weltjens I."/>
            <person name="Vanstreels E."/>
            <person name="Rieger M."/>
            <person name="Schaefer M."/>
            <person name="Mueller-Auer S."/>
            <person name="Gabel C."/>
            <person name="Fuchs M."/>
            <person name="Duesterhoeft A."/>
            <person name="Fritzc C."/>
            <person name="Holzer E."/>
            <person name="Moestl D."/>
            <person name="Hilbert H."/>
            <person name="Borzym K."/>
            <person name="Langer I."/>
            <person name="Beck A."/>
            <person name="Lehrach H."/>
            <person name="Reinhardt R."/>
            <person name="Pohl T.M."/>
            <person name="Eger P."/>
            <person name="Zimmermann W."/>
            <person name="Wedler H."/>
            <person name="Wambutt R."/>
            <person name="Purnelle B."/>
            <person name="Goffeau A."/>
            <person name="Cadieu E."/>
            <person name="Dreano S."/>
            <person name="Gloux S."/>
            <person name="Lelaure V."/>
            <person name="Mottier S."/>
            <person name="Galibert F."/>
            <person name="Aves S.J."/>
            <person name="Xiang Z."/>
            <person name="Hunt C."/>
            <person name="Moore K."/>
            <person name="Hurst S.M."/>
            <person name="Lucas M."/>
            <person name="Rochet M."/>
            <person name="Gaillardin C."/>
            <person name="Tallada V.A."/>
            <person name="Garzon A."/>
            <person name="Thode G."/>
            <person name="Daga R.R."/>
            <person name="Cruzado L."/>
            <person name="Jimenez J."/>
            <person name="Sanchez M."/>
            <person name="del Rey F."/>
            <person name="Benito J."/>
            <person name="Dominguez A."/>
            <person name="Revuelta J.L."/>
            <person name="Moreno S."/>
            <person name="Armstrong J."/>
            <person name="Forsburg S.L."/>
            <person name="Cerutti L."/>
            <person name="Lowe T."/>
            <person name="McCombie W.R."/>
            <person name="Paulsen I."/>
            <person name="Potashkin J."/>
            <person name="Shpakovski G.V."/>
            <person name="Ussery D."/>
            <person name="Barrell B.G."/>
            <person name="Nurse P."/>
        </authorList>
    </citation>
    <scope>NUCLEOTIDE SEQUENCE [LARGE SCALE GENOMIC DNA]</scope>
    <source>
        <strain>972 / ATCC 24843</strain>
    </source>
</reference>
<reference key="2">
    <citation type="journal article" date="2006" name="Nat. Biotechnol.">
        <title>ORFeome cloning and global analysis of protein localization in the fission yeast Schizosaccharomyces pombe.</title>
        <authorList>
            <person name="Matsuyama A."/>
            <person name="Arai R."/>
            <person name="Yashiroda Y."/>
            <person name="Shirai A."/>
            <person name="Kamata A."/>
            <person name="Sekido S."/>
            <person name="Kobayashi Y."/>
            <person name="Hashimoto A."/>
            <person name="Hamamoto M."/>
            <person name="Hiraoka Y."/>
            <person name="Horinouchi S."/>
            <person name="Yoshida M."/>
        </authorList>
    </citation>
    <scope>SUBCELLULAR LOCATION [LARGE SCALE ANALYSIS]</scope>
</reference>
<sequence>MALKIKIPETSQSSDEYSRWTVYHIEVAFPNGGKHVVFRRFNEFVALDAQIRPNDYNSRLCKLPSKSWVSSTVTNEKLRESRRLALQAYVQCLSETPWIKMPVVKKFLNIKDESEDETQGQFLGPTDWIQVFQDCKRNLHMYRVDLMSGKSITIGVQTKNVYAIKSLMDNLSESLDKLELANALGPGEILRRKDMLEQLGSEFLSFKRLVKNANSPVAPPSASSQLNSSNPSSPFRPLSASTDKQSNTSLNRVLGKNRMPETQTTKKLDNVGLYNMQNQTMEDQDMQAESLLPIIQRQKELSKMINQEVVEQNSMLDELSNEAYANQKKLHRTRAGLRKLG</sequence>
<gene>
    <name type="ORF">SPCC594.06c</name>
</gene>
<feature type="chain" id="PRO_0000339882" description="Vacuolar morphogenesis protein 7 homolog">
    <location>
        <begin position="1"/>
        <end position="341"/>
    </location>
</feature>
<feature type="domain" description="PX" evidence="2">
    <location>
        <begin position="1"/>
        <end position="115"/>
    </location>
</feature>
<feature type="domain" description="t-SNARE coiled-coil homology" evidence="3">
    <location>
        <begin position="278"/>
        <end position="340"/>
    </location>
</feature>
<feature type="region of interest" description="Disordered" evidence="4">
    <location>
        <begin position="214"/>
        <end position="265"/>
    </location>
</feature>
<feature type="compositionally biased region" description="Low complexity" evidence="4">
    <location>
        <begin position="214"/>
        <end position="233"/>
    </location>
</feature>
<feature type="compositionally biased region" description="Polar residues" evidence="4">
    <location>
        <begin position="239"/>
        <end position="251"/>
    </location>
</feature>
<dbReference type="EMBL" id="CU329672">
    <property type="protein sequence ID" value="CAA20665.1"/>
    <property type="molecule type" value="Genomic_DNA"/>
</dbReference>
<dbReference type="PIR" id="T41450">
    <property type="entry name" value="T41450"/>
</dbReference>
<dbReference type="SMR" id="O74509"/>
<dbReference type="BioGRID" id="275428">
    <property type="interactions" value="75"/>
</dbReference>
<dbReference type="FunCoup" id="O74509">
    <property type="interactions" value="55"/>
</dbReference>
<dbReference type="STRING" id="284812.O74509"/>
<dbReference type="iPTMnet" id="O74509"/>
<dbReference type="PaxDb" id="4896-SPCC594.06c.1"/>
<dbReference type="EnsemblFungi" id="SPCC594.06c.1">
    <property type="protein sequence ID" value="SPCC594.06c.1:pep"/>
    <property type="gene ID" value="SPCC594.06c"/>
</dbReference>
<dbReference type="KEGG" id="spo:2538847"/>
<dbReference type="PomBase" id="SPCC594.06c"/>
<dbReference type="VEuPathDB" id="FungiDB:SPCC594.06c"/>
<dbReference type="eggNOG" id="ENOG502RXJQ">
    <property type="taxonomic scope" value="Eukaryota"/>
</dbReference>
<dbReference type="HOGENOM" id="CLU_033748_2_0_1"/>
<dbReference type="InParanoid" id="O74509"/>
<dbReference type="OMA" id="DSFDTRW"/>
<dbReference type="PhylomeDB" id="O74509"/>
<dbReference type="Reactome" id="R-SPO-6811440">
    <property type="pathway name" value="Retrograde transport at the Trans-Golgi-Network"/>
</dbReference>
<dbReference type="PRO" id="PR:O74509"/>
<dbReference type="Proteomes" id="UP000002485">
    <property type="component" value="Chromosome III"/>
</dbReference>
<dbReference type="GO" id="GO:0012505">
    <property type="term" value="C:endomembrane system"/>
    <property type="evidence" value="ECO:0000318"/>
    <property type="project" value="GO_Central"/>
</dbReference>
<dbReference type="GO" id="GO:0000324">
    <property type="term" value="C:fungal-type vacuole"/>
    <property type="evidence" value="ECO:0007005"/>
    <property type="project" value="PomBase"/>
</dbReference>
<dbReference type="GO" id="GO:0000329">
    <property type="term" value="C:fungal-type vacuole membrane"/>
    <property type="evidence" value="ECO:0000314"/>
    <property type="project" value="PomBase"/>
</dbReference>
<dbReference type="GO" id="GO:0005770">
    <property type="term" value="C:late endosome"/>
    <property type="evidence" value="ECO:0000314"/>
    <property type="project" value="PomBase"/>
</dbReference>
<dbReference type="GO" id="GO:0031201">
    <property type="term" value="C:SNARE complex"/>
    <property type="evidence" value="ECO:0000318"/>
    <property type="project" value="GO_Central"/>
</dbReference>
<dbReference type="GO" id="GO:0035091">
    <property type="term" value="F:phosphatidylinositol binding"/>
    <property type="evidence" value="ECO:0000255"/>
    <property type="project" value="PomBase"/>
</dbReference>
<dbReference type="GO" id="GO:0005484">
    <property type="term" value="F:SNAP receptor activity"/>
    <property type="evidence" value="ECO:0000318"/>
    <property type="project" value="GO_Central"/>
</dbReference>
<dbReference type="GO" id="GO:0000149">
    <property type="term" value="F:SNARE binding"/>
    <property type="evidence" value="ECO:0000318"/>
    <property type="project" value="GO_Central"/>
</dbReference>
<dbReference type="GO" id="GO:0006896">
    <property type="term" value="P:Golgi to vacuole transport"/>
    <property type="evidence" value="ECO:0000316"/>
    <property type="project" value="PomBase"/>
</dbReference>
<dbReference type="GO" id="GO:0006886">
    <property type="term" value="P:intracellular protein transport"/>
    <property type="evidence" value="ECO:0000318"/>
    <property type="project" value="GO_Central"/>
</dbReference>
<dbReference type="GO" id="GO:0097576">
    <property type="term" value="P:vacuole fusion"/>
    <property type="evidence" value="ECO:0000316"/>
    <property type="project" value="PomBase"/>
</dbReference>
<dbReference type="GO" id="GO:0048278">
    <property type="term" value="P:vesicle docking"/>
    <property type="evidence" value="ECO:0000318"/>
    <property type="project" value="GO_Central"/>
</dbReference>
<dbReference type="GO" id="GO:0006906">
    <property type="term" value="P:vesicle fusion"/>
    <property type="evidence" value="ECO:0000318"/>
    <property type="project" value="GO_Central"/>
</dbReference>
<dbReference type="CDD" id="cd06897">
    <property type="entry name" value="PX_SNARE"/>
    <property type="match status" value="1"/>
</dbReference>
<dbReference type="CDD" id="cd15858">
    <property type="entry name" value="SNARE_VAM7"/>
    <property type="match status" value="1"/>
</dbReference>
<dbReference type="FunFam" id="1.20.5.110:FF:000058">
    <property type="entry name" value="VAM7p Vacuolar SNARE protein"/>
    <property type="match status" value="1"/>
</dbReference>
<dbReference type="Gene3D" id="1.20.5.110">
    <property type="match status" value="1"/>
</dbReference>
<dbReference type="Gene3D" id="3.30.1520.10">
    <property type="entry name" value="Phox-like domain"/>
    <property type="match status" value="1"/>
</dbReference>
<dbReference type="InterPro" id="IPR001683">
    <property type="entry name" value="PX_dom"/>
</dbReference>
<dbReference type="InterPro" id="IPR036871">
    <property type="entry name" value="PX_dom_sf"/>
</dbReference>
<dbReference type="InterPro" id="IPR000727">
    <property type="entry name" value="T_SNARE_dom"/>
</dbReference>
<dbReference type="Pfam" id="PF00787">
    <property type="entry name" value="PX"/>
    <property type="match status" value="1"/>
</dbReference>
<dbReference type="SMART" id="SM00312">
    <property type="entry name" value="PX"/>
    <property type="match status" value="1"/>
</dbReference>
<dbReference type="SMART" id="SM00397">
    <property type="entry name" value="t_SNARE"/>
    <property type="match status" value="1"/>
</dbReference>
<dbReference type="SUPFAM" id="SSF64268">
    <property type="entry name" value="PX domain"/>
    <property type="match status" value="1"/>
</dbReference>
<dbReference type="SUPFAM" id="SSF58038">
    <property type="entry name" value="SNARE fusion complex"/>
    <property type="match status" value="1"/>
</dbReference>
<dbReference type="PROSITE" id="PS50195">
    <property type="entry name" value="PX"/>
    <property type="match status" value="1"/>
</dbReference>
<dbReference type="PROSITE" id="PS50192">
    <property type="entry name" value="T_SNARE"/>
    <property type="match status" value="1"/>
</dbReference>
<evidence type="ECO:0000250" key="1"/>
<evidence type="ECO:0000255" key="2">
    <source>
        <dbReference type="PROSITE-ProRule" id="PRU00147"/>
    </source>
</evidence>
<evidence type="ECO:0000255" key="3">
    <source>
        <dbReference type="PROSITE-ProRule" id="PRU00202"/>
    </source>
</evidence>
<evidence type="ECO:0000256" key="4">
    <source>
        <dbReference type="SAM" id="MobiDB-lite"/>
    </source>
</evidence>
<evidence type="ECO:0000269" key="5">
    <source>
    </source>
</evidence>
<name>VAM7_SCHPO</name>